<protein>
    <recommendedName>
        <fullName evidence="1">Lon protease</fullName>
        <ecNumber evidence="1">3.4.21.53</ecNumber>
    </recommendedName>
    <alternativeName>
        <fullName evidence="1">ATP-dependent protease La</fullName>
    </alternativeName>
</protein>
<evidence type="ECO:0000255" key="1">
    <source>
        <dbReference type="HAMAP-Rule" id="MF_01973"/>
    </source>
</evidence>
<evidence type="ECO:0000255" key="2">
    <source>
        <dbReference type="PROSITE-ProRule" id="PRU01122"/>
    </source>
</evidence>
<evidence type="ECO:0000255" key="3">
    <source>
        <dbReference type="PROSITE-ProRule" id="PRU01123"/>
    </source>
</evidence>
<name>LON_MALP2</name>
<reference key="1">
    <citation type="journal article" date="2002" name="Nucleic Acids Res.">
        <title>The complete genomic sequence of Mycoplasma penetrans, an intracellular bacterial pathogen in humans.</title>
        <authorList>
            <person name="Sasaki Y."/>
            <person name="Ishikawa J."/>
            <person name="Yamashita A."/>
            <person name="Oshima K."/>
            <person name="Kenri T."/>
            <person name="Furuya K."/>
            <person name="Yoshino C."/>
            <person name="Horino A."/>
            <person name="Shiba T."/>
            <person name="Sasaki T."/>
            <person name="Hattori M."/>
        </authorList>
    </citation>
    <scope>NUCLEOTIDE SEQUENCE [LARGE SCALE GENOMIC DNA]</scope>
    <source>
        <strain>HF-2</strain>
    </source>
</reference>
<sequence>MNNKKNEKTTNNKEIANVLVTRGIVFYPNTKIRIEIGREKSIAAINDSKEKKQNMIVVSQENPSIDSPSKNEIFTVGTLCSFEIDNKHPDGSYSIIFTGIKRVKINKLSEKASDGEIKTKFFYADYSEIEEDTKLSKSNEEAIKDLHAKFENELNNLTFFPKKDLALSKENRHTIVDWLPIALKFSLEEKQQLLEEPSLSKRIEKILSFTIDERVSQKIDSEISKKINTNLSKQQKEFYLRERVRAIKEELGDISSKEDDAESIRDRVRNNPYPEHIKKRILSEVNKLESSSNSNEYSMSKTYIDWLIDLPYWQKTDDVDSLADVENVLNNNHYGLEKVKERIIEYLAVRMKSKSAKGSIICLVGPPGVGKTSLAQSIAEALKKKFVKVSLGGMRDEAELKGHRKTYIGAMPGRIIKAMSKAGVVNPVFLLDEIDKLGSDHKGDPASAMLDILDPEQNNRFSDNYIEEDYDLSNVLFIATANYEENIPEPLHDRLEIIRLSSYTENEKLSIAKNYLVKKILVESALKKDELKFTDDGLSYIIKRYTREAGVREVERAIRQIARKFVVRQQKEKLTSQTIGVEEVKYYLKKEIYDYTKKDKEYMPGVVNGMAYTTAGGDLLPIEATFAPGKGKIEITGNLKETMKESVNVALGYVKTNAVKFGIDPKIFGEIDLHVHVPSGGIPKDGPSAGIALTTAILSALKNVKIPSNVAMTGEITLRGRVLIIGGVKEKTISAYRGGANDIFMPKEDERYLDDVPEEVRSKIKITLVDTYDDVYNRLFK</sequence>
<comment type="function">
    <text evidence="1">ATP-dependent serine protease that mediates the selective degradation of mutant and abnormal proteins as well as certain short-lived regulatory proteins. Required for cellular homeostasis and for survival from DNA damage and developmental changes induced by stress. Degrades polypeptides processively to yield small peptide fragments that are 5 to 10 amino acids long. Binds to DNA in a double-stranded, site-specific manner.</text>
</comment>
<comment type="catalytic activity">
    <reaction evidence="1">
        <text>Hydrolysis of proteins in presence of ATP.</text>
        <dbReference type="EC" id="3.4.21.53"/>
    </reaction>
</comment>
<comment type="subunit">
    <text evidence="1">Homohexamer. Organized in a ring with a central cavity.</text>
</comment>
<comment type="subcellular location">
    <subcellularLocation>
        <location evidence="1">Cytoplasm</location>
    </subcellularLocation>
</comment>
<comment type="induction">
    <text evidence="1">By heat shock.</text>
</comment>
<comment type="similarity">
    <text evidence="1">Belongs to the peptidase S16 family.</text>
</comment>
<gene>
    <name evidence="1" type="primary">lon</name>
    <name type="ordered locus">MYPE6910</name>
</gene>
<proteinExistence type="inferred from homology"/>
<accession>Q8EV77</accession>
<feature type="chain" id="PRO_0000396584" description="Lon protease">
    <location>
        <begin position="1"/>
        <end position="781"/>
    </location>
</feature>
<feature type="domain" description="Lon N-terminal" evidence="3">
    <location>
        <begin position="16"/>
        <end position="214"/>
    </location>
</feature>
<feature type="domain" description="Lon proteolytic" evidence="2">
    <location>
        <begin position="601"/>
        <end position="781"/>
    </location>
</feature>
<feature type="active site" evidence="1">
    <location>
        <position position="688"/>
    </location>
</feature>
<feature type="active site" evidence="1">
    <location>
        <position position="731"/>
    </location>
</feature>
<feature type="binding site" evidence="1">
    <location>
        <begin position="365"/>
        <end position="372"/>
    </location>
    <ligand>
        <name>ATP</name>
        <dbReference type="ChEBI" id="CHEBI:30616"/>
    </ligand>
</feature>
<organism>
    <name type="scientific">Malacoplasma penetrans (strain HF-2)</name>
    <name type="common">Mycoplasma penetrans</name>
    <dbReference type="NCBI Taxonomy" id="272633"/>
    <lineage>
        <taxon>Bacteria</taxon>
        <taxon>Bacillati</taxon>
        <taxon>Mycoplasmatota</taxon>
        <taxon>Mycoplasmoidales</taxon>
        <taxon>Mycoplasmoidaceae</taxon>
        <taxon>Malacoplasma</taxon>
    </lineage>
</organism>
<keyword id="KW-0067">ATP-binding</keyword>
<keyword id="KW-0963">Cytoplasm</keyword>
<keyword id="KW-0378">Hydrolase</keyword>
<keyword id="KW-0547">Nucleotide-binding</keyword>
<keyword id="KW-0645">Protease</keyword>
<keyword id="KW-1185">Reference proteome</keyword>
<keyword id="KW-0720">Serine protease</keyword>
<keyword id="KW-0346">Stress response</keyword>
<dbReference type="EC" id="3.4.21.53" evidence="1"/>
<dbReference type="EMBL" id="BA000026">
    <property type="protein sequence ID" value="BAC44483.1"/>
    <property type="molecule type" value="Genomic_DNA"/>
</dbReference>
<dbReference type="RefSeq" id="WP_011077513.1">
    <property type="nucleotide sequence ID" value="NC_004432.1"/>
</dbReference>
<dbReference type="SMR" id="Q8EV77"/>
<dbReference type="FunCoup" id="Q8EV77">
    <property type="interactions" value="229"/>
</dbReference>
<dbReference type="STRING" id="272633.gene:10731812"/>
<dbReference type="MEROPS" id="S16.004"/>
<dbReference type="KEGG" id="mpe:MYPE6910"/>
<dbReference type="eggNOG" id="COG0466">
    <property type="taxonomic scope" value="Bacteria"/>
</dbReference>
<dbReference type="HOGENOM" id="CLU_004109_4_3_14"/>
<dbReference type="InParanoid" id="Q8EV77"/>
<dbReference type="Proteomes" id="UP000002522">
    <property type="component" value="Chromosome"/>
</dbReference>
<dbReference type="GO" id="GO:0005737">
    <property type="term" value="C:cytoplasm"/>
    <property type="evidence" value="ECO:0007669"/>
    <property type="project" value="UniProtKB-SubCell"/>
</dbReference>
<dbReference type="GO" id="GO:0005524">
    <property type="term" value="F:ATP binding"/>
    <property type="evidence" value="ECO:0007669"/>
    <property type="project" value="UniProtKB-UniRule"/>
</dbReference>
<dbReference type="GO" id="GO:0016887">
    <property type="term" value="F:ATP hydrolysis activity"/>
    <property type="evidence" value="ECO:0007669"/>
    <property type="project" value="UniProtKB-UniRule"/>
</dbReference>
<dbReference type="GO" id="GO:0004176">
    <property type="term" value="F:ATP-dependent peptidase activity"/>
    <property type="evidence" value="ECO:0007669"/>
    <property type="project" value="UniProtKB-UniRule"/>
</dbReference>
<dbReference type="GO" id="GO:0043565">
    <property type="term" value="F:sequence-specific DNA binding"/>
    <property type="evidence" value="ECO:0007669"/>
    <property type="project" value="UniProtKB-UniRule"/>
</dbReference>
<dbReference type="GO" id="GO:0004252">
    <property type="term" value="F:serine-type endopeptidase activity"/>
    <property type="evidence" value="ECO:0007669"/>
    <property type="project" value="UniProtKB-UniRule"/>
</dbReference>
<dbReference type="GO" id="GO:0034605">
    <property type="term" value="P:cellular response to heat"/>
    <property type="evidence" value="ECO:0007669"/>
    <property type="project" value="UniProtKB-UniRule"/>
</dbReference>
<dbReference type="GO" id="GO:0006515">
    <property type="term" value="P:protein quality control for misfolded or incompletely synthesized proteins"/>
    <property type="evidence" value="ECO:0007669"/>
    <property type="project" value="UniProtKB-UniRule"/>
</dbReference>
<dbReference type="CDD" id="cd19500">
    <property type="entry name" value="RecA-like_Lon"/>
    <property type="match status" value="1"/>
</dbReference>
<dbReference type="FunFam" id="3.40.50.300:FF:000021">
    <property type="entry name" value="Lon protease homolog"/>
    <property type="match status" value="1"/>
</dbReference>
<dbReference type="Gene3D" id="1.10.8.60">
    <property type="match status" value="1"/>
</dbReference>
<dbReference type="Gene3D" id="1.20.5.5270">
    <property type="match status" value="1"/>
</dbReference>
<dbReference type="Gene3D" id="1.20.58.1480">
    <property type="match status" value="1"/>
</dbReference>
<dbReference type="Gene3D" id="3.30.230.10">
    <property type="match status" value="1"/>
</dbReference>
<dbReference type="Gene3D" id="2.30.130.40">
    <property type="entry name" value="LON domain-like"/>
    <property type="match status" value="1"/>
</dbReference>
<dbReference type="Gene3D" id="3.40.50.300">
    <property type="entry name" value="P-loop containing nucleotide triphosphate hydrolases"/>
    <property type="match status" value="1"/>
</dbReference>
<dbReference type="HAMAP" id="MF_01973">
    <property type="entry name" value="lon_bact"/>
    <property type="match status" value="1"/>
</dbReference>
<dbReference type="InterPro" id="IPR003593">
    <property type="entry name" value="AAA+_ATPase"/>
</dbReference>
<dbReference type="InterPro" id="IPR003959">
    <property type="entry name" value="ATPase_AAA_core"/>
</dbReference>
<dbReference type="InterPro" id="IPR027543">
    <property type="entry name" value="Lon_bac"/>
</dbReference>
<dbReference type="InterPro" id="IPR004815">
    <property type="entry name" value="Lon_bac/euk-typ"/>
</dbReference>
<dbReference type="InterPro" id="IPR054594">
    <property type="entry name" value="Lon_lid"/>
</dbReference>
<dbReference type="InterPro" id="IPR008269">
    <property type="entry name" value="Lon_proteolytic"/>
</dbReference>
<dbReference type="InterPro" id="IPR027065">
    <property type="entry name" value="Lon_Prtase"/>
</dbReference>
<dbReference type="InterPro" id="IPR003111">
    <property type="entry name" value="Lon_prtase_N"/>
</dbReference>
<dbReference type="InterPro" id="IPR046336">
    <property type="entry name" value="Lon_prtase_N_sf"/>
</dbReference>
<dbReference type="InterPro" id="IPR027417">
    <property type="entry name" value="P-loop_NTPase"/>
</dbReference>
<dbReference type="InterPro" id="IPR008268">
    <property type="entry name" value="Peptidase_S16_AS"/>
</dbReference>
<dbReference type="InterPro" id="IPR015947">
    <property type="entry name" value="PUA-like_sf"/>
</dbReference>
<dbReference type="InterPro" id="IPR020568">
    <property type="entry name" value="Ribosomal_Su5_D2-typ_SF"/>
</dbReference>
<dbReference type="InterPro" id="IPR014721">
    <property type="entry name" value="Ribsml_uS5_D2-typ_fold_subgr"/>
</dbReference>
<dbReference type="NCBIfam" id="TIGR00763">
    <property type="entry name" value="lon"/>
    <property type="match status" value="1"/>
</dbReference>
<dbReference type="PANTHER" id="PTHR10046">
    <property type="entry name" value="ATP DEPENDENT LON PROTEASE FAMILY MEMBER"/>
    <property type="match status" value="1"/>
</dbReference>
<dbReference type="Pfam" id="PF00004">
    <property type="entry name" value="AAA"/>
    <property type="match status" value="1"/>
</dbReference>
<dbReference type="Pfam" id="PF05362">
    <property type="entry name" value="Lon_C"/>
    <property type="match status" value="1"/>
</dbReference>
<dbReference type="Pfam" id="PF22667">
    <property type="entry name" value="Lon_lid"/>
    <property type="match status" value="1"/>
</dbReference>
<dbReference type="Pfam" id="PF02190">
    <property type="entry name" value="LON_substr_bdg"/>
    <property type="match status" value="1"/>
</dbReference>
<dbReference type="PIRSF" id="PIRSF001174">
    <property type="entry name" value="Lon_proteas"/>
    <property type="match status" value="1"/>
</dbReference>
<dbReference type="PRINTS" id="PR00830">
    <property type="entry name" value="ENDOLAPTASE"/>
</dbReference>
<dbReference type="SMART" id="SM00382">
    <property type="entry name" value="AAA"/>
    <property type="match status" value="1"/>
</dbReference>
<dbReference type="SMART" id="SM00464">
    <property type="entry name" value="LON"/>
    <property type="match status" value="1"/>
</dbReference>
<dbReference type="SUPFAM" id="SSF52540">
    <property type="entry name" value="P-loop containing nucleoside triphosphate hydrolases"/>
    <property type="match status" value="1"/>
</dbReference>
<dbReference type="SUPFAM" id="SSF88697">
    <property type="entry name" value="PUA domain-like"/>
    <property type="match status" value="1"/>
</dbReference>
<dbReference type="SUPFAM" id="SSF54211">
    <property type="entry name" value="Ribosomal protein S5 domain 2-like"/>
    <property type="match status" value="1"/>
</dbReference>
<dbReference type="PROSITE" id="PS51787">
    <property type="entry name" value="LON_N"/>
    <property type="match status" value="1"/>
</dbReference>
<dbReference type="PROSITE" id="PS51786">
    <property type="entry name" value="LON_PROTEOLYTIC"/>
    <property type="match status" value="1"/>
</dbReference>
<dbReference type="PROSITE" id="PS01046">
    <property type="entry name" value="LON_SER"/>
    <property type="match status" value="1"/>
</dbReference>